<proteinExistence type="inferred from homology"/>
<organism>
    <name type="scientific">Dichelobacter nodosus</name>
    <name type="common">Bacteroides nodosus</name>
    <dbReference type="NCBI Taxonomy" id="870"/>
    <lineage>
        <taxon>Bacteria</taxon>
        <taxon>Pseudomonadati</taxon>
        <taxon>Pseudomonadota</taxon>
        <taxon>Gammaproteobacteria</taxon>
        <taxon>Cardiobacteriales</taxon>
        <taxon>Cardiobacteriaceae</taxon>
        <taxon>Dichelobacter</taxon>
    </lineage>
</organism>
<dbReference type="EC" id="3.4.23.43" evidence="1"/>
<dbReference type="EC" id="2.1.1.-" evidence="1"/>
<dbReference type="EMBL" id="U17138">
    <property type="protein sequence ID" value="AAB65807.1"/>
    <property type="molecule type" value="Genomic_DNA"/>
</dbReference>
<dbReference type="RefSeq" id="WP_012031428.1">
    <property type="nucleotide sequence ID" value="NZ_SRJB01000012.1"/>
</dbReference>
<dbReference type="MEROPS" id="A24.001"/>
<dbReference type="PATRIC" id="fig|870.4.peg.1003"/>
<dbReference type="OMA" id="GAWGGWQ"/>
<dbReference type="GO" id="GO:0005886">
    <property type="term" value="C:plasma membrane"/>
    <property type="evidence" value="ECO:0007669"/>
    <property type="project" value="UniProtKB-SubCell"/>
</dbReference>
<dbReference type="GO" id="GO:0004190">
    <property type="term" value="F:aspartic-type endopeptidase activity"/>
    <property type="evidence" value="ECO:0007669"/>
    <property type="project" value="UniProtKB-EC"/>
</dbReference>
<dbReference type="GO" id="GO:0046872">
    <property type="term" value="F:metal ion binding"/>
    <property type="evidence" value="ECO:0007669"/>
    <property type="project" value="UniProtKB-KW"/>
</dbReference>
<dbReference type="GO" id="GO:0008168">
    <property type="term" value="F:methyltransferase activity"/>
    <property type="evidence" value="ECO:0007669"/>
    <property type="project" value="UniProtKB-KW"/>
</dbReference>
<dbReference type="GO" id="GO:0032259">
    <property type="term" value="P:methylation"/>
    <property type="evidence" value="ECO:0007669"/>
    <property type="project" value="UniProtKB-KW"/>
</dbReference>
<dbReference type="GO" id="GO:0006465">
    <property type="term" value="P:signal peptide processing"/>
    <property type="evidence" value="ECO:0007669"/>
    <property type="project" value="TreeGrafter"/>
</dbReference>
<dbReference type="FunFam" id="1.20.120.1220:FF:000001">
    <property type="entry name" value="Type 4 prepilin-like proteins leader peptide-processing enzyme"/>
    <property type="match status" value="1"/>
</dbReference>
<dbReference type="Gene3D" id="1.20.120.1220">
    <property type="match status" value="1"/>
</dbReference>
<dbReference type="InterPro" id="IPR014032">
    <property type="entry name" value="Peptidase_A24A_bac"/>
</dbReference>
<dbReference type="InterPro" id="IPR000045">
    <property type="entry name" value="Prepilin_IV_endopep_pep"/>
</dbReference>
<dbReference type="InterPro" id="IPR010627">
    <property type="entry name" value="Prepilin_pept_A24_N"/>
</dbReference>
<dbReference type="InterPro" id="IPR050882">
    <property type="entry name" value="Prepilin_peptidase/N-MTase"/>
</dbReference>
<dbReference type="PANTHER" id="PTHR30487:SF0">
    <property type="entry name" value="PREPILIN LEADER PEPTIDASE_N-METHYLTRANSFERASE-RELATED"/>
    <property type="match status" value="1"/>
</dbReference>
<dbReference type="PANTHER" id="PTHR30487">
    <property type="entry name" value="TYPE 4 PREPILIN-LIKE PROTEINS LEADER PEPTIDE-PROCESSING ENZYME"/>
    <property type="match status" value="1"/>
</dbReference>
<dbReference type="Pfam" id="PF06750">
    <property type="entry name" value="A24_N_bact"/>
    <property type="match status" value="1"/>
</dbReference>
<dbReference type="Pfam" id="PF01478">
    <property type="entry name" value="Peptidase_A24"/>
    <property type="match status" value="1"/>
</dbReference>
<dbReference type="PRINTS" id="PR00864">
    <property type="entry name" value="PREPILNPTASE"/>
</dbReference>
<comment type="function">
    <text evidence="1">Plays an essential role in type IV pili and type II pseudopili formation by proteolytically removing the leader sequence from substrate proteins and subsequently monomethylating the alpha-amino group of the newly exposed N-terminal phenylalanine.</text>
</comment>
<comment type="catalytic activity">
    <reaction evidence="1">
        <text>Typically cleaves a -Gly-|-Phe- bond to release an N-terminal, basic peptide of 5-8 residues from type IV prepilin, and then N-methylates the new N-terminal amino group, the methyl donor being S-adenosyl-L-methionine.</text>
        <dbReference type="EC" id="3.4.23.43"/>
    </reaction>
</comment>
<comment type="cofactor">
    <cofactor evidence="1">
        <name>Zn(2+)</name>
        <dbReference type="ChEBI" id="CHEBI:29105"/>
    </cofactor>
    <text evidence="1">Zinc is required for the N-terminal methylation of the mature pilin, but not for signal peptide cleavage.</text>
</comment>
<comment type="subcellular location">
    <subcellularLocation>
        <location evidence="1">Cell inner membrane</location>
        <topology evidence="1">Multi-pass membrane protein</topology>
    </subcellularLocation>
</comment>
<comment type="similarity">
    <text evidence="3">Belongs to the peptidase A24 family.</text>
</comment>
<keyword id="KW-0997">Cell inner membrane</keyword>
<keyword id="KW-1003">Cell membrane</keyword>
<keyword id="KW-0378">Hydrolase</keyword>
<keyword id="KW-0472">Membrane</keyword>
<keyword id="KW-0479">Metal-binding</keyword>
<keyword id="KW-0489">Methyltransferase</keyword>
<keyword id="KW-0511">Multifunctional enzyme</keyword>
<keyword id="KW-0645">Protease</keyword>
<keyword id="KW-0949">S-adenosyl-L-methionine</keyword>
<keyword id="KW-0808">Transferase</keyword>
<keyword id="KW-0812">Transmembrane</keyword>
<keyword id="KW-1133">Transmembrane helix</keyword>
<keyword id="KW-0862">Zinc</keyword>
<sequence length="286" mass="31863">MLISELLQTPLGIFFVGLFSLMVGSFLNVVIYRVPVMMDREEKQYAWQVFHGEDSVCPEIPKQRFNLLVPASRCPHCGHRIRAIENIPVISWLFLKGKCSGCGAAISARYLLVELLTAALSVIVAFHYHDPLSLGFALVFTWTLIALCFIDAEHQLLPDRLTLPLLWLGILAALFNVFINLESSVIGAMIGYLSLWSVYWLFKLITGREGMGYGDFKLLACLCAWQGAWMLPIILFSAAILGMIYALGIGLRMGKPMPFGPFLAIAGWLTFLYGAQIGQLFGYFPA</sequence>
<accession>Q46525</accession>
<protein>
    <recommendedName>
        <fullName>Prepilin leader peptidase/N-methyltransferase</fullName>
    </recommendedName>
    <domain>
        <recommendedName>
            <fullName>Leader peptidase</fullName>
            <ecNumber evidence="1">3.4.23.43</ecNumber>
        </recommendedName>
        <alternativeName>
            <fullName>Prepilin peptidase</fullName>
        </alternativeName>
    </domain>
    <domain>
        <recommendedName>
            <fullName>N-methyltransferase</fullName>
            <ecNumber evidence="1">2.1.1.-</ecNumber>
        </recommendedName>
    </domain>
</protein>
<gene>
    <name type="primary">fimP</name>
</gene>
<evidence type="ECO:0000250" key="1">
    <source>
        <dbReference type="UniProtKB" id="P22610"/>
    </source>
</evidence>
<evidence type="ECO:0000255" key="2"/>
<evidence type="ECO:0000305" key="3"/>
<reference key="1">
    <citation type="journal article" date="1995" name="Gene">
        <title>Identification of fimbrial assembly genes from Dichelobacter nodosus: evidence that fimP encodes the type-IV prepilin peptidase.</title>
        <authorList>
            <person name="Johnston J.L."/>
            <person name="Billington S.J."/>
            <person name="Haring V."/>
            <person name="Rood J.I."/>
        </authorList>
    </citation>
    <scope>NUCLEOTIDE SEQUENCE [GENOMIC DNA]</scope>
    <source>
        <strain>A198</strain>
    </source>
</reference>
<feature type="chain" id="PRO_0000192617" description="Prepilin leader peptidase/N-methyltransferase">
    <location>
        <begin position="1"/>
        <end position="286"/>
    </location>
</feature>
<feature type="transmembrane region" description="Helical" evidence="2">
    <location>
        <begin position="11"/>
        <end position="31"/>
    </location>
</feature>
<feature type="transmembrane region" description="Helical" evidence="2">
    <location>
        <begin position="106"/>
        <end position="126"/>
    </location>
</feature>
<feature type="transmembrane region" description="Helical" evidence="2">
    <location>
        <begin position="132"/>
        <end position="152"/>
    </location>
</feature>
<feature type="transmembrane region" description="Helical" evidence="2">
    <location>
        <begin position="161"/>
        <end position="181"/>
    </location>
</feature>
<feature type="transmembrane region" description="Helical" evidence="2">
    <location>
        <begin position="185"/>
        <end position="205"/>
    </location>
</feature>
<feature type="transmembrane region" description="Helical" evidence="2">
    <location>
        <begin position="231"/>
        <end position="251"/>
    </location>
</feature>
<feature type="transmembrane region" description="Helical" evidence="2">
    <location>
        <begin position="257"/>
        <end position="277"/>
    </location>
</feature>
<feature type="binding site" evidence="1">
    <location>
        <position position="74"/>
    </location>
    <ligand>
        <name>Zn(2+)</name>
        <dbReference type="ChEBI" id="CHEBI:29105"/>
    </ligand>
</feature>
<feature type="binding site" evidence="1">
    <location>
        <position position="77"/>
    </location>
    <ligand>
        <name>Zn(2+)</name>
        <dbReference type="ChEBI" id="CHEBI:29105"/>
    </ligand>
</feature>
<feature type="binding site" evidence="1">
    <location>
        <position position="99"/>
    </location>
    <ligand>
        <name>Zn(2+)</name>
        <dbReference type="ChEBI" id="CHEBI:29105"/>
    </ligand>
</feature>
<feature type="binding site" evidence="1">
    <location>
        <position position="102"/>
    </location>
    <ligand>
        <name>Zn(2+)</name>
        <dbReference type="ChEBI" id="CHEBI:29105"/>
    </ligand>
</feature>
<name>LEP4_DICNO</name>